<protein>
    <recommendedName>
        <fullName>U4/U6 snRNA-associated-splicing factor PRP24</fullName>
        <shortName>U4/U6 snRNP protein</shortName>
    </recommendedName>
</protein>
<keyword id="KW-0002">3D-structure</keyword>
<keyword id="KW-0507">mRNA processing</keyword>
<keyword id="KW-0508">mRNA splicing</keyword>
<keyword id="KW-0539">Nucleus</keyword>
<keyword id="KW-0597">Phosphoprotein</keyword>
<keyword id="KW-1185">Reference proteome</keyword>
<keyword id="KW-0677">Repeat</keyword>
<keyword id="KW-0694">RNA-binding</keyword>
<evidence type="ECO:0000255" key="1">
    <source>
        <dbReference type="PROSITE-ProRule" id="PRU00176"/>
    </source>
</evidence>
<evidence type="ECO:0000256" key="2">
    <source>
        <dbReference type="SAM" id="MobiDB-lite"/>
    </source>
</evidence>
<evidence type="ECO:0000269" key="3">
    <source>
    </source>
</evidence>
<evidence type="ECO:0000269" key="4">
    <source>
    </source>
</evidence>
<evidence type="ECO:0000269" key="5">
    <source>
    </source>
</evidence>
<evidence type="ECO:0000269" key="6">
    <source>
    </source>
</evidence>
<evidence type="ECO:0000269" key="7">
    <source>
    </source>
</evidence>
<evidence type="ECO:0000269" key="8">
    <source>
    </source>
</evidence>
<evidence type="ECO:0000269" key="9">
    <source>
    </source>
</evidence>
<evidence type="ECO:0000269" key="10">
    <source>
    </source>
</evidence>
<evidence type="ECO:0000269" key="11">
    <source>
    </source>
</evidence>
<evidence type="ECO:0000269" key="12">
    <source>
    </source>
</evidence>
<evidence type="ECO:0000269" key="13">
    <source>
    </source>
</evidence>
<evidence type="ECO:0000305" key="14"/>
<evidence type="ECO:0000305" key="15">
    <source>
    </source>
</evidence>
<evidence type="ECO:0007744" key="16">
    <source>
        <dbReference type="PDB" id="2GHP"/>
    </source>
</evidence>
<evidence type="ECO:0007744" key="17">
    <source>
        <dbReference type="PDB" id="2GO9"/>
    </source>
</evidence>
<evidence type="ECO:0007744" key="18">
    <source>
        <dbReference type="PDB" id="2KH9"/>
    </source>
</evidence>
<evidence type="ECO:0007744" key="19">
    <source>
        <dbReference type="PDB" id="2L9W"/>
    </source>
</evidence>
<evidence type="ECO:0007744" key="20">
    <source>
        <dbReference type="PDB" id="4N0T"/>
    </source>
</evidence>
<evidence type="ECO:0007744" key="21">
    <source>
        <dbReference type="PDB" id="5TF6"/>
    </source>
</evidence>
<evidence type="ECO:0007744" key="22">
    <source>
        <dbReference type="PDB" id="5VSU"/>
    </source>
</evidence>
<evidence type="ECO:0007744" key="23">
    <source>
        <dbReference type="PDB" id="6ASO"/>
    </source>
</evidence>
<evidence type="ECO:0007744" key="24">
    <source>
    </source>
</evidence>
<evidence type="ECO:0007744" key="25">
    <source>
    </source>
</evidence>
<evidence type="ECO:0007829" key="26">
    <source>
        <dbReference type="PDB" id="2GHP"/>
    </source>
</evidence>
<evidence type="ECO:0007829" key="27">
    <source>
        <dbReference type="PDB" id="2GO9"/>
    </source>
</evidence>
<evidence type="ECO:0007829" key="28">
    <source>
        <dbReference type="PDB" id="2KH9"/>
    </source>
</evidence>
<evidence type="ECO:0007829" key="29">
    <source>
        <dbReference type="PDB" id="4N0T"/>
    </source>
</evidence>
<evidence type="ECO:0007829" key="30">
    <source>
        <dbReference type="PDB" id="5TF6"/>
    </source>
</evidence>
<evidence type="ECO:0007829" key="31">
    <source>
        <dbReference type="PDB" id="5VSU"/>
    </source>
</evidence>
<proteinExistence type="evidence at protein level"/>
<reference key="1">
    <citation type="journal article" date="1997" name="Nature">
        <title>The nucleotide sequence of Saccharomyces cerevisiae chromosome XIII.</title>
        <authorList>
            <person name="Bowman S."/>
            <person name="Churcher C.M."/>
            <person name="Badcock K."/>
            <person name="Brown D."/>
            <person name="Chillingworth T."/>
            <person name="Connor R."/>
            <person name="Dedman K."/>
            <person name="Devlin K."/>
            <person name="Gentles S."/>
            <person name="Hamlin N."/>
            <person name="Hunt S."/>
            <person name="Jagels K."/>
            <person name="Lye G."/>
            <person name="Moule S."/>
            <person name="Odell C."/>
            <person name="Pearson D."/>
            <person name="Rajandream M.A."/>
            <person name="Rice P."/>
            <person name="Skelton J."/>
            <person name="Walsh S.V."/>
            <person name="Whitehead S."/>
            <person name="Barrell B.G."/>
        </authorList>
    </citation>
    <scope>NUCLEOTIDE SEQUENCE [LARGE SCALE GENOMIC DNA]</scope>
    <source>
        <strain>ATCC 204508 / S288c</strain>
    </source>
</reference>
<reference key="2">
    <citation type="journal article" date="2014" name="G3 (Bethesda)">
        <title>The reference genome sequence of Saccharomyces cerevisiae: Then and now.</title>
        <authorList>
            <person name="Engel S.R."/>
            <person name="Dietrich F.S."/>
            <person name="Fisk D.G."/>
            <person name="Binkley G."/>
            <person name="Balakrishnan R."/>
            <person name="Costanzo M.C."/>
            <person name="Dwight S.S."/>
            <person name="Hitz B.C."/>
            <person name="Karra K."/>
            <person name="Nash R.S."/>
            <person name="Weng S."/>
            <person name="Wong E.D."/>
            <person name="Lloyd P."/>
            <person name="Skrzypek M.S."/>
            <person name="Miyasato S.R."/>
            <person name="Simison M."/>
            <person name="Cherry J.M."/>
        </authorList>
    </citation>
    <scope>GENOME REANNOTATION</scope>
    <source>
        <strain>ATCC 204508 / S288c</strain>
    </source>
</reference>
<reference key="3">
    <citation type="journal article" date="2007" name="Genome Res.">
        <title>Approaching a complete repository of sequence-verified protein-encoding clones for Saccharomyces cerevisiae.</title>
        <authorList>
            <person name="Hu Y."/>
            <person name="Rolfs A."/>
            <person name="Bhullar B."/>
            <person name="Murthy T.V.S."/>
            <person name="Zhu C."/>
            <person name="Berger M.F."/>
            <person name="Camargo A.A."/>
            <person name="Kelley F."/>
            <person name="McCarron S."/>
            <person name="Jepson D."/>
            <person name="Richardson A."/>
            <person name="Raphael J."/>
            <person name="Moreira D."/>
            <person name="Taycher E."/>
            <person name="Zuo D."/>
            <person name="Mohr S."/>
            <person name="Kane M.F."/>
            <person name="Williamson J."/>
            <person name="Simpson A.J.G."/>
            <person name="Bulyk M.L."/>
            <person name="Harlow E."/>
            <person name="Marsischky G."/>
            <person name="Kolodner R.D."/>
            <person name="LaBaer J."/>
        </authorList>
    </citation>
    <scope>NUCLEOTIDE SEQUENCE [GENOMIC DNA]</scope>
    <source>
        <strain>ATCC 204508 / S288c</strain>
    </source>
</reference>
<reference key="4">
    <citation type="journal article" date="1991" name="Genes Dev.">
        <title>Suppressors of a U4 snRNA mutation define a novel U6 snRNP protein with RNA-binding motifs.</title>
        <authorList>
            <person name="Shannon K.W."/>
            <person name="Guthrie C."/>
        </authorList>
    </citation>
    <scope>NUCLEOTIDE SEQUENCE [GENOMIC DNA] OF 202-288</scope>
    <scope>FUNCTION</scope>
</reference>
<reference key="5">
    <citation type="journal article" date="1995" name="EMBO J.">
        <title>Evidence for a Prp24 binding site in U6 snRNA and in a putative intermediate in the annealing of U6 and U4 snRNAs.</title>
        <authorList>
            <person name="Jandrositz A."/>
            <person name="Guthrie C."/>
        </authorList>
    </citation>
    <scope>CHARACTERIZATION</scope>
</reference>
<reference key="6">
    <citation type="journal article" date="1995" name="RNA">
        <title>Specificity of Prp24 binding to RNA: a role for Prp24 in the dynamic interaction of U4 and U6 snRNAs.</title>
        <authorList>
            <person name="Ghetti A."/>
            <person name="Company M."/>
            <person name="Abelson J."/>
        </authorList>
    </citation>
    <scope>CHARACTERIZATION</scope>
</reference>
<reference key="7">
    <citation type="journal article" date="1998" name="Science">
        <title>A spliceosomal recycling factor that reanneals U4 and U6 small nuclear ribonucleoprotein particles.</title>
        <authorList>
            <person name="Raghunathan P.L."/>
            <person name="Guthrie C."/>
        </authorList>
    </citation>
    <scope>FUNCTION</scope>
</reference>
<reference key="8">
    <citation type="journal article" date="2003" name="Nature">
        <title>Global analysis of protein expression in yeast.</title>
        <authorList>
            <person name="Ghaemmaghami S."/>
            <person name="Huh W.-K."/>
            <person name="Bower K."/>
            <person name="Howson R.W."/>
            <person name="Belle A."/>
            <person name="Dephoure N."/>
            <person name="O'Shea E.K."/>
            <person name="Weissman J.S."/>
        </authorList>
    </citation>
    <scope>LEVEL OF PROTEIN EXPRESSION [LARGE SCALE ANALYSIS]</scope>
</reference>
<reference key="9">
    <citation type="journal article" date="2008" name="Mol. Cell. Proteomics">
        <title>A multidimensional chromatography technology for in-depth phosphoproteome analysis.</title>
        <authorList>
            <person name="Albuquerque C.P."/>
            <person name="Smolka M.B."/>
            <person name="Payne S.H."/>
            <person name="Bafna V."/>
            <person name="Eng J."/>
            <person name="Zhou H."/>
        </authorList>
    </citation>
    <scope>PHOSPHORYLATION [LARGE SCALE ANALYSIS] AT SER-19</scope>
    <scope>IDENTIFICATION BY MASS SPECTROMETRY [LARGE SCALE ANALYSIS]</scope>
</reference>
<reference key="10">
    <citation type="journal article" date="2009" name="Science">
        <title>Global analysis of Cdk1 substrate phosphorylation sites provides insights into evolution.</title>
        <authorList>
            <person name="Holt L.J."/>
            <person name="Tuch B.B."/>
            <person name="Villen J."/>
            <person name="Johnson A.D."/>
            <person name="Gygi S.P."/>
            <person name="Morgan D.O."/>
        </authorList>
    </citation>
    <scope>PHOSPHORYLATION [LARGE SCALE ANALYSIS] AT SER-19</scope>
    <scope>IDENTIFICATION BY MASS SPECTROMETRY [LARGE SCALE ANALYSIS]</scope>
</reference>
<reference evidence="16 17" key="11">
    <citation type="journal article" date="2007" name="J. Mol. Biol.">
        <title>Structure and interactions of the first three RNA recognition motifs of splicing factor prp24.</title>
        <authorList>
            <person name="Bae E."/>
            <person name="Reiter N.J."/>
            <person name="Bingman C.A."/>
            <person name="Kwan S.S."/>
            <person name="Lee D."/>
            <person name="Phillips G.N."/>
            <person name="Butcher S.E."/>
            <person name="Brow D.A."/>
        </authorList>
    </citation>
    <scope>X-RAY CRYSTALLOGRAPHY (2.70 ANGSTROMS) OF 1-291</scope>
    <scope>SUBUNIT</scope>
    <scope>INTERACTION WITH SNR6</scope>
</reference>
<reference evidence="18" key="12">
    <citation type="journal article" date="2010" name="RNA">
        <title>Structure and functional implications of a complex containing a segment of U6 RNA bound by a domain of Prp24.</title>
        <authorList>
            <person name="Martin-Tumasz S."/>
            <person name="Reiter N.J."/>
            <person name="Brow D.A."/>
            <person name="Butcher S.E."/>
        </authorList>
    </citation>
    <scope>STRUCTURE BY NMR OF 115-197 IN COMPLEX WITH SNR6</scope>
    <scope>INTERACTION WITH SNR6</scope>
</reference>
<reference evidence="19" key="13">
    <citation type="journal article" date="2011" name="Nucleic Acids Res.">
        <title>A novel occluded RNA recognition motif in Prp24 unwinds the U6 RNA internal stem loop.</title>
        <authorList>
            <person name="Martin-Tumasz S."/>
            <person name="Richie A.C."/>
            <person name="Clos L.J."/>
            <person name="Brow D.A."/>
            <person name="Butcher S.E."/>
        </authorList>
    </citation>
    <scope>STRUCTURE BY NMR OF 292-400</scope>
    <scope>FUNCTION</scope>
    <scope>INTERACTION WITH SNR6</scope>
</reference>
<reference evidence="20" key="14">
    <citation type="journal article" date="2014" name="Nat. Struct. Mol. Biol.">
        <title>Core structure of the U6 small nuclear ribonucleoprotein at 1.7-A resolution.</title>
        <authorList>
            <person name="Montemayor E.J."/>
            <person name="Curran E.C."/>
            <person name="Liao H.H."/>
            <person name="Andrews K.L."/>
            <person name="Treba C.N."/>
            <person name="Butcher S.E."/>
            <person name="Brow D.A."/>
        </authorList>
    </citation>
    <scope>X-RAY CRYSTALLOGRAPHY (1.70 ANGSTROMS) OF 34-400 IN COMPLEX WITH SNR6</scope>
    <scope>FUNCTION</scope>
    <scope>INTERACTION WITH SNR6</scope>
</reference>
<reference evidence="21" key="15">
    <citation type="journal article" date="2017" name="Acta Crystallogr. D Struct. Biol.">
        <title>Structure and conformational plasticity of the U6 small nuclear ribonucleoprotein core.</title>
        <authorList>
            <person name="Montemayor E.J."/>
            <person name="Didychuk A.L."/>
            <person name="Liao H."/>
            <person name="Hu P."/>
            <person name="Brow D.A."/>
            <person name="Butcher S.E."/>
        </authorList>
    </citation>
    <scope>X-RAY CRYSTALLOGRAPHY (2.30 ANGSTROMS) OF 34-400 IN COMPLEX WITH SNRNA U6 SNR6</scope>
    <scope>INTERACTION WITH SNR6</scope>
</reference>
<reference evidence="22 23" key="16">
    <citation type="journal article" date="2018" name="Nat. Commun.">
        <title>Architecture of the U6 snRNP reveals specific recognition of 3'-end processed U6 snRNA.</title>
        <authorList>
            <person name="Montemayor E.J."/>
            <person name="Didychuk A.L."/>
            <person name="Yake A.D."/>
            <person name="Sidhu G.K."/>
            <person name="Brow D.A."/>
            <person name="Butcher S.E."/>
        </authorList>
    </citation>
    <scope>X-RAY CRYSTALLOGRAPHY (2.71 ANGSTROMS) OF 28-444 IN COMPLEX WITH SNR6; LSM2; LSM3; LSM4; LSM5; LSM6; LSM7 AND LSM8</scope>
    <scope>FUNCTION</scope>
    <scope>IDENTIFICATION IN THE U4/U6 SNRNP ASSEMBLY</scope>
    <scope>SUBCELLULAR LOCATION</scope>
</reference>
<accession>P49960</accession>
<accession>D6W094</accession>
<accession>E9P966</accession>
<name>SART3_YEAST</name>
<organism>
    <name type="scientific">Saccharomyces cerevisiae (strain ATCC 204508 / S288c)</name>
    <name type="common">Baker's yeast</name>
    <dbReference type="NCBI Taxonomy" id="559292"/>
    <lineage>
        <taxon>Eukaryota</taxon>
        <taxon>Fungi</taxon>
        <taxon>Dikarya</taxon>
        <taxon>Ascomycota</taxon>
        <taxon>Saccharomycotina</taxon>
        <taxon>Saccharomycetes</taxon>
        <taxon>Saccharomycetales</taxon>
        <taxon>Saccharomycetaceae</taxon>
        <taxon>Saccharomyces</taxon>
    </lineage>
</organism>
<feature type="chain" id="PRO_0000081736" description="U4/U6 snRNA-associated-splicing factor PRP24">
    <location>
        <begin position="1"/>
        <end position="444"/>
    </location>
</feature>
<feature type="domain" description="RRM 1" evidence="1">
    <location>
        <begin position="41"/>
        <end position="116"/>
    </location>
</feature>
<feature type="domain" description="RRM 2" evidence="1">
    <location>
        <begin position="117"/>
        <end position="195"/>
    </location>
</feature>
<feature type="domain" description="RRM 3" evidence="1">
    <location>
        <begin position="210"/>
        <end position="289"/>
    </location>
</feature>
<feature type="region of interest" description="Disordered" evidence="2">
    <location>
        <begin position="1"/>
        <end position="29"/>
    </location>
</feature>
<feature type="compositionally biased region" description="Basic and acidic residues" evidence="2">
    <location>
        <begin position="1"/>
        <end position="16"/>
    </location>
</feature>
<feature type="modified residue" description="Phosphoserine" evidence="24 25">
    <location>
        <position position="19"/>
    </location>
</feature>
<feature type="sequence conflict" description="In Ref. 3; AAU09775." evidence="14" ref="3">
    <original>E</original>
    <variation>G</variation>
    <location>
        <position position="197"/>
    </location>
</feature>
<feature type="helix" evidence="29">
    <location>
        <begin position="39"/>
        <end position="41"/>
    </location>
</feature>
<feature type="strand" evidence="29">
    <location>
        <begin position="42"/>
        <end position="48"/>
    </location>
</feature>
<feature type="helix" evidence="27">
    <location>
        <begin position="50"/>
        <end position="52"/>
    </location>
</feature>
<feature type="helix" evidence="29">
    <location>
        <begin position="54"/>
        <end position="61"/>
    </location>
</feature>
<feature type="helix" evidence="29">
    <location>
        <begin position="62"/>
        <end position="64"/>
    </location>
</feature>
<feature type="strand" evidence="29">
    <location>
        <begin position="67"/>
        <end position="74"/>
    </location>
</feature>
<feature type="strand" evidence="29">
    <location>
        <begin position="78"/>
        <end position="89"/>
    </location>
</feature>
<feature type="helix" evidence="29">
    <location>
        <begin position="90"/>
        <end position="97"/>
    </location>
</feature>
<feature type="turn" evidence="29">
    <location>
        <begin position="98"/>
        <end position="101"/>
    </location>
</feature>
<feature type="strand" evidence="29">
    <location>
        <begin position="110"/>
        <end position="113"/>
    </location>
</feature>
<feature type="strand" evidence="29">
    <location>
        <begin position="118"/>
        <end position="122"/>
    </location>
</feature>
<feature type="helix" evidence="29">
    <location>
        <begin position="130"/>
        <end position="139"/>
    </location>
</feature>
<feature type="turn" evidence="28">
    <location>
        <begin position="140"/>
        <end position="142"/>
    </location>
</feature>
<feature type="strand" evidence="29">
    <location>
        <begin position="144"/>
        <end position="148"/>
    </location>
</feature>
<feature type="helix" evidence="26">
    <location>
        <begin position="152"/>
        <end position="154"/>
    </location>
</feature>
<feature type="strand" evidence="29">
    <location>
        <begin position="160"/>
        <end position="166"/>
    </location>
</feature>
<feature type="helix" evidence="29">
    <location>
        <begin position="168"/>
        <end position="178"/>
    </location>
</feature>
<feature type="strand" evidence="29">
    <location>
        <begin position="189"/>
        <end position="192"/>
    </location>
</feature>
<feature type="helix" evidence="29">
    <location>
        <begin position="195"/>
        <end position="197"/>
    </location>
</feature>
<feature type="helix" evidence="29">
    <location>
        <begin position="204"/>
        <end position="207"/>
    </location>
</feature>
<feature type="turn" evidence="26">
    <location>
        <begin position="208"/>
        <end position="210"/>
    </location>
</feature>
<feature type="strand" evidence="29">
    <location>
        <begin position="211"/>
        <end position="217"/>
    </location>
</feature>
<feature type="helix" evidence="29">
    <location>
        <begin position="219"/>
        <end position="221"/>
    </location>
</feature>
<feature type="helix" evidence="29">
    <location>
        <begin position="224"/>
        <end position="231"/>
    </location>
</feature>
<feature type="helix" evidence="29">
    <location>
        <begin position="232"/>
        <end position="234"/>
    </location>
</feature>
<feature type="strand" evidence="29">
    <location>
        <begin position="237"/>
        <end position="241"/>
    </location>
</feature>
<feature type="turn" evidence="29">
    <location>
        <begin position="244"/>
        <end position="250"/>
    </location>
</feature>
<feature type="strand" evidence="29">
    <location>
        <begin position="252"/>
        <end position="262"/>
    </location>
</feature>
<feature type="helix" evidence="29">
    <location>
        <begin position="263"/>
        <end position="269"/>
    </location>
</feature>
<feature type="helix" evidence="29">
    <location>
        <begin position="270"/>
        <end position="272"/>
    </location>
</feature>
<feature type="strand" evidence="30">
    <location>
        <begin position="275"/>
        <end position="277"/>
    </location>
</feature>
<feature type="strand" evidence="29">
    <location>
        <begin position="283"/>
        <end position="286"/>
    </location>
</feature>
<feature type="helix" evidence="29">
    <location>
        <begin position="290"/>
        <end position="302"/>
    </location>
</feature>
<feature type="helix" evidence="29">
    <location>
        <begin position="307"/>
        <end position="310"/>
    </location>
</feature>
<feature type="strand" evidence="29">
    <location>
        <begin position="313"/>
        <end position="318"/>
    </location>
</feature>
<feature type="helix" evidence="29">
    <location>
        <begin position="325"/>
        <end position="334"/>
    </location>
</feature>
<feature type="helix" evidence="29">
    <location>
        <begin position="340"/>
        <end position="342"/>
    </location>
</feature>
<feature type="strand" evidence="29">
    <location>
        <begin position="343"/>
        <end position="349"/>
    </location>
</feature>
<feature type="helix" evidence="29">
    <location>
        <begin position="350"/>
        <end position="352"/>
    </location>
</feature>
<feature type="strand" evidence="29">
    <location>
        <begin position="354"/>
        <end position="361"/>
    </location>
</feature>
<feature type="helix" evidence="29">
    <location>
        <begin position="362"/>
        <end position="372"/>
    </location>
</feature>
<feature type="strand" evidence="31">
    <location>
        <begin position="375"/>
        <end position="377"/>
    </location>
</feature>
<feature type="strand" evidence="29">
    <location>
        <begin position="383"/>
        <end position="385"/>
    </location>
</feature>
<feature type="helix" evidence="29">
    <location>
        <begin position="387"/>
        <end position="397"/>
    </location>
</feature>
<feature type="helix" evidence="31">
    <location>
        <begin position="434"/>
        <end position="444"/>
    </location>
</feature>
<sequence>MEYGHHARPDSKRPLDEGSPAAAGLTSKKANEALTRNRELTTVLVKNLPKSYNQNKVYKYFKHCGPIIHVDVADSLKKNFRFARIEFARYDGALAAITKTHKVVGQNEIIVSHLTECTLWMTNFPPSYTQRNIRDLLQDINVVALSIRLPSLRFNTSRRFAYIDVTSKEDARYCVEKLNGLKIEGYTLVTKVSNPLEKSKRTDSATLEGREIMIRNLSTELLDENLLRESFEGFGSIEKINIPAGQKEHSFNNCCAFMVFENKDSAERALQMNRSLLGNREISVSLADKKPFLERNEVKRLLASRNSKELETLICLFPLSDKVSPSLICQFLQEEIHINEKDIRKILLVSDFNGAIIIFRDSKFAAKMLMILNGSQFQGKVIRSGTINDMKRYYNNQQNHSMKHVKPSCINMMEKGPNLQVKKKIPDKQEQMSNDDFRKMFLGE</sequence>
<comment type="function">
    <text evidence="5 7 8 10 11 12 13">Functions as a recycling factor of the spliceosome, a machinery that forms on each precursor-messenger RNA (pre-mRNA) and catalyzes the removal of introns (PubMed:1827420, PubMed:21653550, PubMed:24837192, PubMed:7585243, PubMed:7882985, PubMed:9452384). Chaperones the re-annealing of U4 and U6 snRNAs (small nuclear RNAs) released from previous rounds of splicing, an initial step in reforming the U4/U6-U5 tri-snRNP (small nuclear ribonucleoprotein) that can reassemble into another spliceosome complex; this step involves binding U6 and facilitating the unwinding of the U6 internal stem loop, followed by base-pairing of U6 to U4 (PubMed:1827420, PubMed:21653550, PubMed:24837192, PubMed:29717126, PubMed:7585243, PubMed:7882985, PubMed:9452384).</text>
</comment>
<comment type="subunit">
    <text evidence="4 6 7 8 9 10">Monomer (PubMed:17320109). Interacts with U6 snRNA SNR6 and the LSM2-8 complex (small nuclear RNA); to chaperone formation of the U4/U6-U5 tri-snRNP (small nuclear ribonucleoprotein) assembly, the protein is displaced from the U4/U6 snRNP once pairing is complete (PubMed:17320109, PubMed:20181740, PubMed:21653550, PubMed:24837192, PubMed:28045380, PubMed:29717126).</text>
</comment>
<comment type="interaction">
    <interactant intactId="EBI-212">
        <id>P49960</id>
    </interactant>
    <interactant intactId="EBI-313">
        <id>P47093</id>
        <label>LSM8</label>
    </interactant>
    <organismsDiffer>false</organismsDiffer>
    <experiments>3</experiments>
</comment>
<comment type="subcellular location">
    <subcellularLocation>
        <location evidence="15">Nucleus</location>
    </subcellularLocation>
</comment>
<comment type="miscellaneous">
    <text evidence="3">Present with 672 molecules/cell in log phase SD medium.</text>
</comment>
<gene>
    <name type="primary">PRP24</name>
    <name type="ordered locus">YMR268C</name>
    <name type="ORF">YM8156.10C</name>
</gene>
<dbReference type="EMBL" id="Z49260">
    <property type="protein sequence ID" value="CAA89251.1"/>
    <property type="molecule type" value="Genomic_DNA"/>
</dbReference>
<dbReference type="EMBL" id="AY723858">
    <property type="protein sequence ID" value="AAU09775.1"/>
    <property type="molecule type" value="Genomic_DNA"/>
</dbReference>
<dbReference type="EMBL" id="BK006946">
    <property type="protein sequence ID" value="DAA10168.1"/>
    <property type="molecule type" value="Genomic_DNA"/>
</dbReference>
<dbReference type="PIR" id="S54480">
    <property type="entry name" value="S54480"/>
</dbReference>
<dbReference type="RefSeq" id="NP_013995.1">
    <property type="nucleotide sequence ID" value="NM_001182775.1"/>
</dbReference>
<dbReference type="PDB" id="2GHP">
    <property type="method" value="X-ray"/>
    <property type="resolution" value="2.70 A"/>
    <property type="chains" value="A/B/C/D/E/F/G/H=1-291"/>
</dbReference>
<dbReference type="PDB" id="2GO9">
    <property type="method" value="NMR"/>
    <property type="chains" value="A=38-197"/>
</dbReference>
<dbReference type="PDB" id="2KH9">
    <property type="method" value="NMR"/>
    <property type="chains" value="A=115-197"/>
</dbReference>
<dbReference type="PDB" id="2L9W">
    <property type="method" value="NMR"/>
    <property type="chains" value="A=292-400"/>
</dbReference>
<dbReference type="PDB" id="4N0T">
    <property type="method" value="X-ray"/>
    <property type="resolution" value="1.70 A"/>
    <property type="chains" value="A=34-400"/>
</dbReference>
<dbReference type="PDB" id="5TF6">
    <property type="method" value="X-ray"/>
    <property type="resolution" value="2.30 A"/>
    <property type="chains" value="A/C=34-400"/>
</dbReference>
<dbReference type="PDB" id="5VSU">
    <property type="method" value="X-ray"/>
    <property type="resolution" value="3.10 A"/>
    <property type="chains" value="A=1-444"/>
</dbReference>
<dbReference type="PDB" id="6ASO">
    <property type="method" value="X-ray"/>
    <property type="resolution" value="2.71 A"/>
    <property type="chains" value="A=28-444"/>
</dbReference>
<dbReference type="PDBsum" id="2GHP"/>
<dbReference type="PDBsum" id="2GO9"/>
<dbReference type="PDBsum" id="2KH9"/>
<dbReference type="PDBsum" id="2L9W"/>
<dbReference type="PDBsum" id="4N0T"/>
<dbReference type="PDBsum" id="5TF6"/>
<dbReference type="PDBsum" id="5VSU"/>
<dbReference type="PDBsum" id="6ASO"/>
<dbReference type="BMRB" id="P49960"/>
<dbReference type="SMR" id="P49960"/>
<dbReference type="BioGRID" id="35446">
    <property type="interactions" value="574"/>
</dbReference>
<dbReference type="ComplexPortal" id="CPX-24">
    <property type="entry name" value="U6 small nuclear ribonucleoprotein complex"/>
</dbReference>
<dbReference type="DIP" id="DIP-2570N"/>
<dbReference type="FunCoup" id="P49960">
    <property type="interactions" value="156"/>
</dbReference>
<dbReference type="IntAct" id="P49960">
    <property type="interactions" value="9"/>
</dbReference>
<dbReference type="MINT" id="P49960"/>
<dbReference type="STRING" id="4932.YMR268C"/>
<dbReference type="iPTMnet" id="P49960"/>
<dbReference type="PaxDb" id="4932-YMR268C"/>
<dbReference type="PeptideAtlas" id="P49960"/>
<dbReference type="EnsemblFungi" id="YMR268C_mRNA">
    <property type="protein sequence ID" value="YMR268C"/>
    <property type="gene ID" value="YMR268C"/>
</dbReference>
<dbReference type="GeneID" id="855310"/>
<dbReference type="KEGG" id="sce:YMR268C"/>
<dbReference type="AGR" id="SGD:S000004881"/>
<dbReference type="SGD" id="S000004881">
    <property type="gene designation" value="PRP24"/>
</dbReference>
<dbReference type="VEuPathDB" id="FungiDB:YMR268C"/>
<dbReference type="eggNOG" id="KOG0128">
    <property type="taxonomic scope" value="Eukaryota"/>
</dbReference>
<dbReference type="HOGENOM" id="CLU_621223_0_0_1"/>
<dbReference type="InParanoid" id="P49960"/>
<dbReference type="OMA" id="AYIDMAS"/>
<dbReference type="OrthoDB" id="360390at2759"/>
<dbReference type="BioCyc" id="YEAST:G3O-32941-MONOMER"/>
<dbReference type="BioGRID-ORCS" id="855310">
    <property type="hits" value="0 hits in 10 CRISPR screens"/>
</dbReference>
<dbReference type="EvolutionaryTrace" id="P49960"/>
<dbReference type="PRO" id="PR:P49960"/>
<dbReference type="Proteomes" id="UP000002311">
    <property type="component" value="Chromosome XIII"/>
</dbReference>
<dbReference type="RNAct" id="P49960">
    <property type="molecule type" value="protein"/>
</dbReference>
<dbReference type="GO" id="GO:0005634">
    <property type="term" value="C:nucleus"/>
    <property type="evidence" value="ECO:0000303"/>
    <property type="project" value="ComplexPortal"/>
</dbReference>
<dbReference type="GO" id="GO:1990904">
    <property type="term" value="C:ribonucleoprotein complex"/>
    <property type="evidence" value="ECO:0000318"/>
    <property type="project" value="GO_Central"/>
</dbReference>
<dbReference type="GO" id="GO:0005681">
    <property type="term" value="C:spliceosomal complex"/>
    <property type="evidence" value="ECO:0000303"/>
    <property type="project" value="ComplexPortal"/>
</dbReference>
<dbReference type="GO" id="GO:0005688">
    <property type="term" value="C:U6 snRNP"/>
    <property type="evidence" value="ECO:0000314"/>
    <property type="project" value="SGD"/>
</dbReference>
<dbReference type="GO" id="GO:0003723">
    <property type="term" value="F:RNA binding"/>
    <property type="evidence" value="ECO:0000318"/>
    <property type="project" value="GO_Central"/>
</dbReference>
<dbReference type="GO" id="GO:0017069">
    <property type="term" value="F:snRNA binding"/>
    <property type="evidence" value="ECO:0000353"/>
    <property type="project" value="SGD"/>
</dbReference>
<dbReference type="GO" id="GO:0017070">
    <property type="term" value="F:U6 snRNA binding"/>
    <property type="evidence" value="ECO:0000314"/>
    <property type="project" value="UniProtKB"/>
</dbReference>
<dbReference type="GO" id="GO:0000398">
    <property type="term" value="P:mRNA splicing, via spliceosome"/>
    <property type="evidence" value="ECO:0000303"/>
    <property type="project" value="ComplexPortal"/>
</dbReference>
<dbReference type="GO" id="GO:0000245">
    <property type="term" value="P:spliceosomal complex assembly"/>
    <property type="evidence" value="ECO:0000315"/>
    <property type="project" value="SGD"/>
</dbReference>
<dbReference type="GO" id="GO:0000244">
    <property type="term" value="P:spliceosomal tri-snRNP complex assembly"/>
    <property type="evidence" value="ECO:0000314"/>
    <property type="project" value="SGD"/>
</dbReference>
<dbReference type="CDD" id="cd12296">
    <property type="entry name" value="RRM1_Prp24"/>
    <property type="match status" value="1"/>
</dbReference>
<dbReference type="CDD" id="cd12297">
    <property type="entry name" value="RRM2_Prp24"/>
    <property type="match status" value="1"/>
</dbReference>
<dbReference type="CDD" id="cd12298">
    <property type="entry name" value="RRM3_Prp24"/>
    <property type="match status" value="1"/>
</dbReference>
<dbReference type="CDD" id="cd12299">
    <property type="entry name" value="RRM4_Prp24"/>
    <property type="match status" value="1"/>
</dbReference>
<dbReference type="FunFam" id="3.30.70.330:FF:000365">
    <property type="entry name" value="U4/U6 snRNA-associated-splicing factor PRP24"/>
    <property type="match status" value="1"/>
</dbReference>
<dbReference type="Gene3D" id="3.30.70.330">
    <property type="match status" value="4"/>
</dbReference>
<dbReference type="InterPro" id="IPR008669">
    <property type="entry name" value="LSM_interact"/>
</dbReference>
<dbReference type="InterPro" id="IPR012677">
    <property type="entry name" value="Nucleotide-bd_a/b_plait_sf"/>
</dbReference>
<dbReference type="InterPro" id="IPR034397">
    <property type="entry name" value="Prp24_RRM1"/>
</dbReference>
<dbReference type="InterPro" id="IPR034398">
    <property type="entry name" value="Prp24_RRM2"/>
</dbReference>
<dbReference type="InterPro" id="IPR034540">
    <property type="entry name" value="Prp24_RRM3"/>
</dbReference>
<dbReference type="InterPro" id="IPR035979">
    <property type="entry name" value="RBD_domain_sf"/>
</dbReference>
<dbReference type="InterPro" id="IPR000504">
    <property type="entry name" value="RRM_dom"/>
</dbReference>
<dbReference type="InterPro" id="IPR031766">
    <property type="entry name" value="RRM_occluded"/>
</dbReference>
<dbReference type="PANTHER" id="PTHR24012">
    <property type="entry name" value="RNA BINDING PROTEIN"/>
    <property type="match status" value="1"/>
</dbReference>
<dbReference type="Pfam" id="PF05391">
    <property type="entry name" value="Lsm_interact"/>
    <property type="match status" value="1"/>
</dbReference>
<dbReference type="Pfam" id="PF00076">
    <property type="entry name" value="RRM_1"/>
    <property type="match status" value="3"/>
</dbReference>
<dbReference type="Pfam" id="PF16842">
    <property type="entry name" value="RRM_occluded"/>
    <property type="match status" value="1"/>
</dbReference>
<dbReference type="SMART" id="SM00360">
    <property type="entry name" value="RRM"/>
    <property type="match status" value="4"/>
</dbReference>
<dbReference type="SUPFAM" id="SSF54928">
    <property type="entry name" value="RNA-binding domain, RBD"/>
    <property type="match status" value="2"/>
</dbReference>
<dbReference type="PROSITE" id="PS50102">
    <property type="entry name" value="RRM"/>
    <property type="match status" value="3"/>
</dbReference>